<proteinExistence type="inferred from homology"/>
<dbReference type="EMBL" id="AP008934">
    <property type="protein sequence ID" value="BAE17921.1"/>
    <property type="molecule type" value="Genomic_DNA"/>
</dbReference>
<dbReference type="RefSeq" id="WP_002482721.1">
    <property type="nucleotide sequence ID" value="NZ_MTGA01000032.1"/>
</dbReference>
<dbReference type="SMR" id="Q49Z55"/>
<dbReference type="GeneID" id="97227503"/>
<dbReference type="KEGG" id="ssp:SSP0776"/>
<dbReference type="eggNOG" id="COG0636">
    <property type="taxonomic scope" value="Bacteria"/>
</dbReference>
<dbReference type="HOGENOM" id="CLU_148047_1_1_9"/>
<dbReference type="OrthoDB" id="2357540at2"/>
<dbReference type="Proteomes" id="UP000006371">
    <property type="component" value="Chromosome"/>
</dbReference>
<dbReference type="GO" id="GO:0005886">
    <property type="term" value="C:plasma membrane"/>
    <property type="evidence" value="ECO:0007669"/>
    <property type="project" value="UniProtKB-SubCell"/>
</dbReference>
<dbReference type="GO" id="GO:0045259">
    <property type="term" value="C:proton-transporting ATP synthase complex"/>
    <property type="evidence" value="ECO:0007669"/>
    <property type="project" value="UniProtKB-KW"/>
</dbReference>
<dbReference type="GO" id="GO:0033177">
    <property type="term" value="C:proton-transporting two-sector ATPase complex, proton-transporting domain"/>
    <property type="evidence" value="ECO:0007669"/>
    <property type="project" value="InterPro"/>
</dbReference>
<dbReference type="GO" id="GO:0008289">
    <property type="term" value="F:lipid binding"/>
    <property type="evidence" value="ECO:0007669"/>
    <property type="project" value="UniProtKB-KW"/>
</dbReference>
<dbReference type="GO" id="GO:0046933">
    <property type="term" value="F:proton-transporting ATP synthase activity, rotational mechanism"/>
    <property type="evidence" value="ECO:0007669"/>
    <property type="project" value="UniProtKB-UniRule"/>
</dbReference>
<dbReference type="CDD" id="cd18185">
    <property type="entry name" value="ATP-synt_Fo_c_ATPE"/>
    <property type="match status" value="1"/>
</dbReference>
<dbReference type="FunFam" id="1.20.20.10:FF:000004">
    <property type="entry name" value="ATP synthase subunit c"/>
    <property type="match status" value="1"/>
</dbReference>
<dbReference type="Gene3D" id="1.20.20.10">
    <property type="entry name" value="F1F0 ATP synthase subunit C"/>
    <property type="match status" value="1"/>
</dbReference>
<dbReference type="HAMAP" id="MF_01396">
    <property type="entry name" value="ATP_synth_c_bact"/>
    <property type="match status" value="1"/>
</dbReference>
<dbReference type="InterPro" id="IPR005953">
    <property type="entry name" value="ATP_synth_csu_bac/chlpt"/>
</dbReference>
<dbReference type="InterPro" id="IPR000454">
    <property type="entry name" value="ATP_synth_F0_csu"/>
</dbReference>
<dbReference type="InterPro" id="IPR020537">
    <property type="entry name" value="ATP_synth_F0_csu_DDCD_BS"/>
</dbReference>
<dbReference type="InterPro" id="IPR038662">
    <property type="entry name" value="ATP_synth_F0_csu_sf"/>
</dbReference>
<dbReference type="InterPro" id="IPR002379">
    <property type="entry name" value="ATPase_proteolipid_c-like_dom"/>
</dbReference>
<dbReference type="InterPro" id="IPR035921">
    <property type="entry name" value="F/V-ATP_Csub_sf"/>
</dbReference>
<dbReference type="NCBIfam" id="TIGR01260">
    <property type="entry name" value="ATP_synt_c"/>
    <property type="match status" value="1"/>
</dbReference>
<dbReference type="NCBIfam" id="NF005363">
    <property type="entry name" value="PRK06876.1"/>
    <property type="match status" value="1"/>
</dbReference>
<dbReference type="Pfam" id="PF00137">
    <property type="entry name" value="ATP-synt_C"/>
    <property type="match status" value="1"/>
</dbReference>
<dbReference type="PRINTS" id="PR00124">
    <property type="entry name" value="ATPASEC"/>
</dbReference>
<dbReference type="SUPFAM" id="SSF81333">
    <property type="entry name" value="F1F0 ATP synthase subunit C"/>
    <property type="match status" value="1"/>
</dbReference>
<dbReference type="PROSITE" id="PS00605">
    <property type="entry name" value="ATPASE_C"/>
    <property type="match status" value="1"/>
</dbReference>
<accession>Q49Z55</accession>
<comment type="function">
    <text evidence="1">F(1)F(0) ATP synthase produces ATP from ADP in the presence of a proton or sodium gradient. F-type ATPases consist of two structural domains, F(1) containing the extramembraneous catalytic core and F(0) containing the membrane proton channel, linked together by a central stalk and a peripheral stalk. During catalysis, ATP synthesis in the catalytic domain of F(1) is coupled via a rotary mechanism of the central stalk subunits to proton translocation.</text>
</comment>
<comment type="function">
    <text evidence="1">Key component of the F(0) channel; it plays a direct role in translocation across the membrane. A homomeric c-ring of between 10-14 subunits forms the central stalk rotor element with the F(1) delta and epsilon subunits.</text>
</comment>
<comment type="subunit">
    <text evidence="1">F-type ATPases have 2 components, F(1) - the catalytic core - and F(0) - the membrane proton channel. F(1) has five subunits: alpha(3), beta(3), gamma(1), delta(1), epsilon(1). F(0) has three main subunits: a(1), b(2) and c(10-14). The alpha and beta chains form an alternating ring which encloses part of the gamma chain. F(1) is attached to F(0) by a central stalk formed by the gamma and epsilon chains, while a peripheral stalk is formed by the delta and b chains.</text>
</comment>
<comment type="subcellular location">
    <subcellularLocation>
        <location evidence="1">Cell membrane</location>
        <topology evidence="1">Multi-pass membrane protein</topology>
    </subcellularLocation>
</comment>
<comment type="similarity">
    <text evidence="1">Belongs to the ATPase C chain family.</text>
</comment>
<organism>
    <name type="scientific">Staphylococcus saprophyticus subsp. saprophyticus (strain ATCC 15305 / DSM 20229 / NCIMB 8711 / NCTC 7292 / S-41)</name>
    <dbReference type="NCBI Taxonomy" id="342451"/>
    <lineage>
        <taxon>Bacteria</taxon>
        <taxon>Bacillati</taxon>
        <taxon>Bacillota</taxon>
        <taxon>Bacilli</taxon>
        <taxon>Bacillales</taxon>
        <taxon>Staphylococcaceae</taxon>
        <taxon>Staphylococcus</taxon>
    </lineage>
</organism>
<feature type="chain" id="PRO_1000184510" description="ATP synthase subunit c">
    <location>
        <begin position="1"/>
        <end position="68"/>
    </location>
</feature>
<feature type="transmembrane region" description="Helical" evidence="1">
    <location>
        <begin position="4"/>
        <end position="24"/>
    </location>
</feature>
<feature type="transmembrane region" description="Helical" evidence="1">
    <location>
        <begin position="45"/>
        <end position="65"/>
    </location>
</feature>
<feature type="site" description="Reversibly protonated during proton transport" evidence="1">
    <location>
        <position position="54"/>
    </location>
</feature>
<name>ATPL_STAS1</name>
<evidence type="ECO:0000255" key="1">
    <source>
        <dbReference type="HAMAP-Rule" id="MF_01396"/>
    </source>
</evidence>
<reference key="1">
    <citation type="journal article" date="2005" name="Proc. Natl. Acad. Sci. U.S.A.">
        <title>Whole genome sequence of Staphylococcus saprophyticus reveals the pathogenesis of uncomplicated urinary tract infection.</title>
        <authorList>
            <person name="Kuroda M."/>
            <person name="Yamashita A."/>
            <person name="Hirakawa H."/>
            <person name="Kumano M."/>
            <person name="Morikawa K."/>
            <person name="Higashide M."/>
            <person name="Maruyama A."/>
            <person name="Inose Y."/>
            <person name="Matoba K."/>
            <person name="Toh H."/>
            <person name="Kuhara S."/>
            <person name="Hattori M."/>
            <person name="Ohta T."/>
        </authorList>
    </citation>
    <scope>NUCLEOTIDE SEQUENCE [LARGE SCALE GENOMIC DNA]</scope>
    <source>
        <strain>ATCC 15305 / DSM 20229 / NCIMB 8711 / NCTC 7292 / S-41</strain>
    </source>
</reference>
<gene>
    <name evidence="1" type="primary">atpE</name>
    <name type="ordered locus">SSP0776</name>
</gene>
<sequence length="68" mass="6817">MNLIAAAIAIGLSALGAGIGNGLIVSRTVEGVARQPEARGQLMGIMFIGIGLVEALPIIGVVIAFMSL</sequence>
<protein>
    <recommendedName>
        <fullName evidence="1">ATP synthase subunit c</fullName>
    </recommendedName>
    <alternativeName>
        <fullName evidence="1">ATP synthase F(0) sector subunit c</fullName>
    </alternativeName>
    <alternativeName>
        <fullName evidence="1">F-type ATPase subunit c</fullName>
        <shortName evidence="1">F-ATPase subunit c</shortName>
    </alternativeName>
    <alternativeName>
        <fullName evidence="1">Lipid-binding protein</fullName>
    </alternativeName>
</protein>
<keyword id="KW-0066">ATP synthesis</keyword>
<keyword id="KW-1003">Cell membrane</keyword>
<keyword id="KW-0138">CF(0)</keyword>
<keyword id="KW-0375">Hydrogen ion transport</keyword>
<keyword id="KW-0406">Ion transport</keyword>
<keyword id="KW-0446">Lipid-binding</keyword>
<keyword id="KW-0472">Membrane</keyword>
<keyword id="KW-1185">Reference proteome</keyword>
<keyword id="KW-0812">Transmembrane</keyword>
<keyword id="KW-1133">Transmembrane helix</keyword>
<keyword id="KW-0813">Transport</keyword>